<accession>Q3BWZ1</accession>
<feature type="chain" id="PRO_0000224121" description="DNA-directed RNA polymerase subunit beta">
    <location>
        <begin position="1"/>
        <end position="1383"/>
    </location>
</feature>
<proteinExistence type="inferred from homology"/>
<protein>
    <recommendedName>
        <fullName evidence="1">DNA-directed RNA polymerase subunit beta</fullName>
        <shortName evidence="1">RNAP subunit beta</shortName>
        <ecNumber evidence="1">2.7.7.6</ecNumber>
    </recommendedName>
    <alternativeName>
        <fullName evidence="1">RNA polymerase subunit beta</fullName>
    </alternativeName>
    <alternativeName>
        <fullName evidence="1">Transcriptase subunit beta</fullName>
    </alternativeName>
</protein>
<sequence length="1383" mass="154285">MTSYSFTEKKRIRKDFGKQRSILEVPFLLAIQVDSYREFLQEDVEPNKRKDLGLHAALKSVFPISSYSGNAALEYVGYKLGQPVFDERECRQRGMSYGAPLRVTVRLVIYDRESSTKAIKYVKEQEVYLGEIPLMTGNGTFIVNGTERVIVSQLHRSPGVFFDHDRGKTHSSGKLLYSARIIPYRGSWLDFEFDPKDALFTRIDRRRKLPVSILLRALGYSNEEMLAEFFEINTFHINPDEGVQLELVPERLRGETLNFDLADGDKVIVEAGKRITARHVKQLEAAGVAALAVPDDYLVGRILSHDVVDGSTGELLANANDEINEDQLAAFRKAGVDAVGTLWVNDLDRGPYLSNTLRIDPTKTQLEALVEIYRMMRPGEPPTKEAAQNLFHNLFFTFERYDLSTVGRMKFNRRVGRKDVLGESVLYDKKYFAERNDEESKRLVAEHADTSDILEVIKVLTEIRNGRGVVDDIDHLGNRRVRSVGEMAENVFRVGLVRVERAVKERLSMAESEGLTPQELINAKPVAAAIKEFFGSSQLSQFMDQNNPLSEVTHKRRVFALGPGGLTRERAGFEVRDVHPTHYGRVCTIETPEGPNIGLINSLAVFARTNQYGFLETPYRKVLDGKVSDDVEYLSAIEENEYVIAQANALTDAKNMLTEQFVPCRFQGESLLKPPSEVHFMDVSPMQTVSVAAALVPFLEHDDANRALMGANMQRQAVPTLRSQKPLVGTGIERAVARDSGVTVNALRGGVIEQIDAARIVVKVNEAEIGGGTDAGVDIYNLIKYTRSNQNTCINQRPLVNVGDVIARGDVLADGPSTDIGELALGQNMLIAFMPWNGYNFEDSILLSERVVEEDRYTTIHIEELTCVARDTKLGPEEISADIPNVSEQALNRLDESGVVYIGAEVRAGDIMVGKVTPKGESQLTPEEKLLRAIFGEKASDVKDSSLRVPPGMDGTVIDVQVFTRDGIEKDKRARQIEENEIKRVKKDFDDQFRILEAAIYARLRSQIVGKVANGGANLKKGDTVTDAYLDGLKKSDWFQLRMKDEDAADAIERAQKQIQAHEKEFEARFADKRGKITQGDDLAPGVLKMVKVFLAVKRRIQPGDKMAGRHGNKGVVSNVVPVEDMPYMATGESVDIVLNPLGVPSRMNIGQILEVHLGWAAKGLGRKIQRMLEAQAAVSELRKFLNDIYNHDNAINAQRVDLSQFSDEELLNLGKNLIDGVPMATPVFDGASEAEIKRMLELADLPQSGQTQLYDGRTGEAFDRKTTVGYMHYLKLNHLVDDKMHARSTGPYSLVTQQPLGGKAQFGGQRFGEMEVWALEAYGAAYTLQEMLTVKSDDVQGRNQMYKNIVDGEHEMVAGMPESFNVLVKEIRSLAINMELEE</sequence>
<name>RPOB_XANE5</name>
<keyword id="KW-0240">DNA-directed RNA polymerase</keyword>
<keyword id="KW-0548">Nucleotidyltransferase</keyword>
<keyword id="KW-0804">Transcription</keyword>
<keyword id="KW-0808">Transferase</keyword>
<organism>
    <name type="scientific">Xanthomonas euvesicatoria pv. vesicatoria (strain 85-10)</name>
    <name type="common">Xanthomonas campestris pv. vesicatoria</name>
    <dbReference type="NCBI Taxonomy" id="316273"/>
    <lineage>
        <taxon>Bacteria</taxon>
        <taxon>Pseudomonadati</taxon>
        <taxon>Pseudomonadota</taxon>
        <taxon>Gammaproteobacteria</taxon>
        <taxon>Lysobacterales</taxon>
        <taxon>Lysobacteraceae</taxon>
        <taxon>Xanthomonas</taxon>
    </lineage>
</organism>
<dbReference type="EC" id="2.7.7.6" evidence="1"/>
<dbReference type="EMBL" id="AM039952">
    <property type="protein sequence ID" value="CAJ22622.1"/>
    <property type="molecule type" value="Genomic_DNA"/>
</dbReference>
<dbReference type="RefSeq" id="WP_011346538.1">
    <property type="nucleotide sequence ID" value="NZ_CP017190.1"/>
</dbReference>
<dbReference type="SMR" id="Q3BWZ1"/>
<dbReference type="STRING" id="456327.BJD11_17780"/>
<dbReference type="KEGG" id="xcv:XCV0991"/>
<dbReference type="eggNOG" id="COG0085">
    <property type="taxonomic scope" value="Bacteria"/>
</dbReference>
<dbReference type="HOGENOM" id="CLU_000524_4_0_6"/>
<dbReference type="Proteomes" id="UP000007069">
    <property type="component" value="Chromosome"/>
</dbReference>
<dbReference type="GO" id="GO:0000428">
    <property type="term" value="C:DNA-directed RNA polymerase complex"/>
    <property type="evidence" value="ECO:0007669"/>
    <property type="project" value="UniProtKB-KW"/>
</dbReference>
<dbReference type="GO" id="GO:0003677">
    <property type="term" value="F:DNA binding"/>
    <property type="evidence" value="ECO:0007669"/>
    <property type="project" value="UniProtKB-UniRule"/>
</dbReference>
<dbReference type="GO" id="GO:0003899">
    <property type="term" value="F:DNA-directed RNA polymerase activity"/>
    <property type="evidence" value="ECO:0007669"/>
    <property type="project" value="UniProtKB-UniRule"/>
</dbReference>
<dbReference type="GO" id="GO:0032549">
    <property type="term" value="F:ribonucleoside binding"/>
    <property type="evidence" value="ECO:0007669"/>
    <property type="project" value="InterPro"/>
</dbReference>
<dbReference type="GO" id="GO:0006351">
    <property type="term" value="P:DNA-templated transcription"/>
    <property type="evidence" value="ECO:0007669"/>
    <property type="project" value="UniProtKB-UniRule"/>
</dbReference>
<dbReference type="CDD" id="cd00653">
    <property type="entry name" value="RNA_pol_B_RPB2"/>
    <property type="match status" value="1"/>
</dbReference>
<dbReference type="FunFam" id="2.40.50.100:FF:000006">
    <property type="entry name" value="DNA-directed RNA polymerase subunit beta"/>
    <property type="match status" value="1"/>
</dbReference>
<dbReference type="FunFam" id="2.40.50.150:FF:000001">
    <property type="entry name" value="DNA-directed RNA polymerase subunit beta"/>
    <property type="match status" value="1"/>
</dbReference>
<dbReference type="FunFam" id="3.90.1800.10:FF:000001">
    <property type="entry name" value="DNA-directed RNA polymerase subunit beta"/>
    <property type="match status" value="1"/>
</dbReference>
<dbReference type="Gene3D" id="2.40.50.100">
    <property type="match status" value="1"/>
</dbReference>
<dbReference type="Gene3D" id="2.40.50.150">
    <property type="match status" value="1"/>
</dbReference>
<dbReference type="Gene3D" id="3.90.1100.10">
    <property type="match status" value="2"/>
</dbReference>
<dbReference type="Gene3D" id="6.10.140.1670">
    <property type="match status" value="1"/>
</dbReference>
<dbReference type="Gene3D" id="2.30.150.10">
    <property type="entry name" value="DNA-directed RNA polymerase, beta subunit, external 1 domain"/>
    <property type="match status" value="1"/>
</dbReference>
<dbReference type="Gene3D" id="2.40.270.10">
    <property type="entry name" value="DNA-directed RNA polymerase, subunit 2, domain 6"/>
    <property type="match status" value="1"/>
</dbReference>
<dbReference type="Gene3D" id="3.90.1800.10">
    <property type="entry name" value="RNA polymerase alpha subunit dimerisation domain"/>
    <property type="match status" value="1"/>
</dbReference>
<dbReference type="Gene3D" id="3.90.1110.10">
    <property type="entry name" value="RNA polymerase Rpb2, domain 2"/>
    <property type="match status" value="1"/>
</dbReference>
<dbReference type="HAMAP" id="MF_01321">
    <property type="entry name" value="RNApol_bact_RpoB"/>
    <property type="match status" value="1"/>
</dbReference>
<dbReference type="InterPro" id="IPR042107">
    <property type="entry name" value="DNA-dir_RNA_pol_bsu_ext_1_sf"/>
</dbReference>
<dbReference type="InterPro" id="IPR019462">
    <property type="entry name" value="DNA-dir_RNA_pol_bsu_external_1"/>
</dbReference>
<dbReference type="InterPro" id="IPR015712">
    <property type="entry name" value="DNA-dir_RNA_pol_su2"/>
</dbReference>
<dbReference type="InterPro" id="IPR007120">
    <property type="entry name" value="DNA-dir_RNAP_su2_dom"/>
</dbReference>
<dbReference type="InterPro" id="IPR037033">
    <property type="entry name" value="DNA-dir_RNAP_su2_hyb_sf"/>
</dbReference>
<dbReference type="InterPro" id="IPR010243">
    <property type="entry name" value="RNA_pol_bsu_bac"/>
</dbReference>
<dbReference type="InterPro" id="IPR007121">
    <property type="entry name" value="RNA_pol_bsu_CS"/>
</dbReference>
<dbReference type="InterPro" id="IPR007644">
    <property type="entry name" value="RNA_pol_bsu_protrusion"/>
</dbReference>
<dbReference type="InterPro" id="IPR007642">
    <property type="entry name" value="RNA_pol_Rpb2_2"/>
</dbReference>
<dbReference type="InterPro" id="IPR037034">
    <property type="entry name" value="RNA_pol_Rpb2_2_sf"/>
</dbReference>
<dbReference type="InterPro" id="IPR007645">
    <property type="entry name" value="RNA_pol_Rpb2_3"/>
</dbReference>
<dbReference type="InterPro" id="IPR007641">
    <property type="entry name" value="RNA_pol_Rpb2_7"/>
</dbReference>
<dbReference type="InterPro" id="IPR014724">
    <property type="entry name" value="RNA_pol_RPB2_OB-fold"/>
</dbReference>
<dbReference type="NCBIfam" id="NF001616">
    <property type="entry name" value="PRK00405.1"/>
    <property type="match status" value="1"/>
</dbReference>
<dbReference type="NCBIfam" id="TIGR02013">
    <property type="entry name" value="rpoB"/>
    <property type="match status" value="1"/>
</dbReference>
<dbReference type="PANTHER" id="PTHR20856">
    <property type="entry name" value="DNA-DIRECTED RNA POLYMERASE I SUBUNIT 2"/>
    <property type="match status" value="1"/>
</dbReference>
<dbReference type="Pfam" id="PF04563">
    <property type="entry name" value="RNA_pol_Rpb2_1"/>
    <property type="match status" value="1"/>
</dbReference>
<dbReference type="Pfam" id="PF04561">
    <property type="entry name" value="RNA_pol_Rpb2_2"/>
    <property type="match status" value="3"/>
</dbReference>
<dbReference type="Pfam" id="PF04565">
    <property type="entry name" value="RNA_pol_Rpb2_3"/>
    <property type="match status" value="1"/>
</dbReference>
<dbReference type="Pfam" id="PF10385">
    <property type="entry name" value="RNA_pol_Rpb2_45"/>
    <property type="match status" value="1"/>
</dbReference>
<dbReference type="Pfam" id="PF00562">
    <property type="entry name" value="RNA_pol_Rpb2_6"/>
    <property type="match status" value="1"/>
</dbReference>
<dbReference type="Pfam" id="PF04560">
    <property type="entry name" value="RNA_pol_Rpb2_7"/>
    <property type="match status" value="1"/>
</dbReference>
<dbReference type="SUPFAM" id="SSF64484">
    <property type="entry name" value="beta and beta-prime subunits of DNA dependent RNA-polymerase"/>
    <property type="match status" value="1"/>
</dbReference>
<dbReference type="PROSITE" id="PS01166">
    <property type="entry name" value="RNA_POL_BETA"/>
    <property type="match status" value="1"/>
</dbReference>
<reference key="1">
    <citation type="journal article" date="2005" name="J. Bacteriol.">
        <title>Insights into genome plasticity and pathogenicity of the plant pathogenic Bacterium Xanthomonas campestris pv. vesicatoria revealed by the complete genome sequence.</title>
        <authorList>
            <person name="Thieme F."/>
            <person name="Koebnik R."/>
            <person name="Bekel T."/>
            <person name="Berger C."/>
            <person name="Boch J."/>
            <person name="Buettner D."/>
            <person name="Caldana C."/>
            <person name="Gaigalat L."/>
            <person name="Goesmann A."/>
            <person name="Kay S."/>
            <person name="Kirchner O."/>
            <person name="Lanz C."/>
            <person name="Linke B."/>
            <person name="McHardy A.C."/>
            <person name="Meyer F."/>
            <person name="Mittenhuber G."/>
            <person name="Nies D.H."/>
            <person name="Niesbach-Kloesgen U."/>
            <person name="Patschkowski T."/>
            <person name="Rueckert C."/>
            <person name="Rupp O."/>
            <person name="Schneiker S."/>
            <person name="Schuster S.C."/>
            <person name="Vorhoelter F.J."/>
            <person name="Weber E."/>
            <person name="Puehler A."/>
            <person name="Bonas U."/>
            <person name="Bartels D."/>
            <person name="Kaiser O."/>
        </authorList>
    </citation>
    <scope>NUCLEOTIDE SEQUENCE [LARGE SCALE GENOMIC DNA]</scope>
    <source>
        <strain>85-10</strain>
    </source>
</reference>
<comment type="function">
    <text evidence="1">DNA-dependent RNA polymerase catalyzes the transcription of DNA into RNA using the four ribonucleoside triphosphates as substrates.</text>
</comment>
<comment type="catalytic activity">
    <reaction evidence="1">
        <text>RNA(n) + a ribonucleoside 5'-triphosphate = RNA(n+1) + diphosphate</text>
        <dbReference type="Rhea" id="RHEA:21248"/>
        <dbReference type="Rhea" id="RHEA-COMP:14527"/>
        <dbReference type="Rhea" id="RHEA-COMP:17342"/>
        <dbReference type="ChEBI" id="CHEBI:33019"/>
        <dbReference type="ChEBI" id="CHEBI:61557"/>
        <dbReference type="ChEBI" id="CHEBI:140395"/>
        <dbReference type="EC" id="2.7.7.6"/>
    </reaction>
</comment>
<comment type="subunit">
    <text evidence="1">The RNAP catalytic core consists of 2 alpha, 1 beta, 1 beta' and 1 omega subunit. When a sigma factor is associated with the core the holoenzyme is formed, which can initiate transcription.</text>
</comment>
<comment type="similarity">
    <text evidence="1">Belongs to the RNA polymerase beta chain family.</text>
</comment>
<gene>
    <name evidence="1" type="primary">rpoB</name>
    <name type="ordered locus">XCV0991</name>
</gene>
<evidence type="ECO:0000255" key="1">
    <source>
        <dbReference type="HAMAP-Rule" id="MF_01321"/>
    </source>
</evidence>